<feature type="chain" id="PRO_1000068736" description="Pyrimidine/purine nucleoside phosphorylase">
    <location>
        <begin position="1"/>
        <end position="96"/>
    </location>
</feature>
<organism>
    <name type="scientific">Serratia proteamaculans (strain 568)</name>
    <dbReference type="NCBI Taxonomy" id="399741"/>
    <lineage>
        <taxon>Bacteria</taxon>
        <taxon>Pseudomonadati</taxon>
        <taxon>Pseudomonadota</taxon>
        <taxon>Gammaproteobacteria</taxon>
        <taxon>Enterobacterales</taxon>
        <taxon>Yersiniaceae</taxon>
        <taxon>Serratia</taxon>
    </lineage>
</organism>
<dbReference type="EC" id="2.4.2.1" evidence="1"/>
<dbReference type="EC" id="2.4.2.2" evidence="1"/>
<dbReference type="EMBL" id="CP000826">
    <property type="protein sequence ID" value="ABV40130.1"/>
    <property type="molecule type" value="Genomic_DNA"/>
</dbReference>
<dbReference type="SMR" id="A8GAJ0"/>
<dbReference type="STRING" id="399741.Spro_1026"/>
<dbReference type="KEGG" id="spe:Spro_1026"/>
<dbReference type="eggNOG" id="COG3123">
    <property type="taxonomic scope" value="Bacteria"/>
</dbReference>
<dbReference type="HOGENOM" id="CLU_157874_0_0_6"/>
<dbReference type="OrthoDB" id="9793848at2"/>
<dbReference type="GO" id="GO:0005829">
    <property type="term" value="C:cytosol"/>
    <property type="evidence" value="ECO:0007669"/>
    <property type="project" value="TreeGrafter"/>
</dbReference>
<dbReference type="GO" id="GO:0047975">
    <property type="term" value="F:guanosine phosphorylase activity"/>
    <property type="evidence" value="ECO:0007669"/>
    <property type="project" value="UniProtKB-EC"/>
</dbReference>
<dbReference type="GO" id="GO:0004731">
    <property type="term" value="F:purine-nucleoside phosphorylase activity"/>
    <property type="evidence" value="ECO:0007669"/>
    <property type="project" value="UniProtKB-UniRule"/>
</dbReference>
<dbReference type="GO" id="GO:0009032">
    <property type="term" value="F:thymidine phosphorylase activity"/>
    <property type="evidence" value="ECO:0007669"/>
    <property type="project" value="UniProtKB-EC"/>
</dbReference>
<dbReference type="GO" id="GO:0004850">
    <property type="term" value="F:uridine phosphorylase activity"/>
    <property type="evidence" value="ECO:0007669"/>
    <property type="project" value="UniProtKB-EC"/>
</dbReference>
<dbReference type="FunFam" id="2.60.120.10:FF:000016">
    <property type="entry name" value="Pyrimidine/purine nucleoside phosphorylase"/>
    <property type="match status" value="1"/>
</dbReference>
<dbReference type="Gene3D" id="2.60.120.10">
    <property type="entry name" value="Jelly Rolls"/>
    <property type="match status" value="1"/>
</dbReference>
<dbReference type="HAMAP" id="MF_01537">
    <property type="entry name" value="Nucleos_phosphorylase_PpnP"/>
    <property type="match status" value="1"/>
</dbReference>
<dbReference type="InterPro" id="IPR009664">
    <property type="entry name" value="Ppnp"/>
</dbReference>
<dbReference type="InterPro" id="IPR014710">
    <property type="entry name" value="RmlC-like_jellyroll"/>
</dbReference>
<dbReference type="InterPro" id="IPR011051">
    <property type="entry name" value="RmlC_Cupin_sf"/>
</dbReference>
<dbReference type="NCBIfam" id="NF007875">
    <property type="entry name" value="PRK10579.1"/>
    <property type="match status" value="1"/>
</dbReference>
<dbReference type="PANTHER" id="PTHR36540">
    <property type="entry name" value="PYRIMIDINE/PURINE NUCLEOSIDE PHOSPHORYLASE"/>
    <property type="match status" value="1"/>
</dbReference>
<dbReference type="PANTHER" id="PTHR36540:SF1">
    <property type="entry name" value="PYRIMIDINE_PURINE NUCLEOSIDE PHOSPHORYLASE"/>
    <property type="match status" value="1"/>
</dbReference>
<dbReference type="Pfam" id="PF06865">
    <property type="entry name" value="Ppnp"/>
    <property type="match status" value="1"/>
</dbReference>
<dbReference type="SUPFAM" id="SSF51182">
    <property type="entry name" value="RmlC-like cupins"/>
    <property type="match status" value="1"/>
</dbReference>
<sequence length="96" mass="10534">MLKVNEYFAGKVKSIGFDSSSIGLTSVGVMEEGEYTFTTALPEEMTVITGALKVLLPGSPDWQVFMPGEKFFVPAHSEFNLQVADATAYLCRYLSK</sequence>
<gene>
    <name evidence="1" type="primary">ppnP</name>
    <name type="ordered locus">Spro_1026</name>
</gene>
<proteinExistence type="inferred from homology"/>
<evidence type="ECO:0000255" key="1">
    <source>
        <dbReference type="HAMAP-Rule" id="MF_01537"/>
    </source>
</evidence>
<name>PPNP_SERP5</name>
<protein>
    <recommendedName>
        <fullName evidence="1">Pyrimidine/purine nucleoside phosphorylase</fullName>
        <ecNumber evidence="1">2.4.2.1</ecNumber>
        <ecNumber evidence="1">2.4.2.2</ecNumber>
    </recommendedName>
    <alternativeName>
        <fullName evidence="1">Adenosine phosphorylase</fullName>
    </alternativeName>
    <alternativeName>
        <fullName evidence="1">Cytidine phosphorylase</fullName>
    </alternativeName>
    <alternativeName>
        <fullName evidence="1">Guanosine phosphorylase</fullName>
    </alternativeName>
    <alternativeName>
        <fullName evidence="1">Inosine phosphorylase</fullName>
    </alternativeName>
    <alternativeName>
        <fullName evidence="1">Thymidine phosphorylase</fullName>
    </alternativeName>
    <alternativeName>
        <fullName evidence="1">Uridine phosphorylase</fullName>
    </alternativeName>
    <alternativeName>
        <fullName evidence="1">Xanthosine phosphorylase</fullName>
    </alternativeName>
</protein>
<keyword id="KW-0328">Glycosyltransferase</keyword>
<keyword id="KW-0808">Transferase</keyword>
<reference key="1">
    <citation type="submission" date="2007-09" db="EMBL/GenBank/DDBJ databases">
        <title>Complete sequence of chromosome of Serratia proteamaculans 568.</title>
        <authorList>
            <consortium name="US DOE Joint Genome Institute"/>
            <person name="Copeland A."/>
            <person name="Lucas S."/>
            <person name="Lapidus A."/>
            <person name="Barry K."/>
            <person name="Glavina del Rio T."/>
            <person name="Dalin E."/>
            <person name="Tice H."/>
            <person name="Pitluck S."/>
            <person name="Chain P."/>
            <person name="Malfatti S."/>
            <person name="Shin M."/>
            <person name="Vergez L."/>
            <person name="Schmutz J."/>
            <person name="Larimer F."/>
            <person name="Land M."/>
            <person name="Hauser L."/>
            <person name="Kyrpides N."/>
            <person name="Kim E."/>
            <person name="Taghavi S."/>
            <person name="Newman L."/>
            <person name="Vangronsveld J."/>
            <person name="van der Lelie D."/>
            <person name="Richardson P."/>
        </authorList>
    </citation>
    <scope>NUCLEOTIDE SEQUENCE [LARGE SCALE GENOMIC DNA]</scope>
    <source>
        <strain>568</strain>
    </source>
</reference>
<accession>A8GAJ0</accession>
<comment type="function">
    <text evidence="1">Catalyzes the phosphorolysis of diverse nucleosides, yielding D-ribose 1-phosphate and the respective free bases. Can use uridine, adenosine, guanosine, cytidine, thymidine, inosine and xanthosine as substrates. Also catalyzes the reverse reactions.</text>
</comment>
<comment type="catalytic activity">
    <reaction evidence="1">
        <text>a purine D-ribonucleoside + phosphate = a purine nucleobase + alpha-D-ribose 1-phosphate</text>
        <dbReference type="Rhea" id="RHEA:19805"/>
        <dbReference type="ChEBI" id="CHEBI:26386"/>
        <dbReference type="ChEBI" id="CHEBI:43474"/>
        <dbReference type="ChEBI" id="CHEBI:57720"/>
        <dbReference type="ChEBI" id="CHEBI:142355"/>
        <dbReference type="EC" id="2.4.2.1"/>
    </reaction>
</comment>
<comment type="catalytic activity">
    <reaction evidence="1">
        <text>adenosine + phosphate = alpha-D-ribose 1-phosphate + adenine</text>
        <dbReference type="Rhea" id="RHEA:27642"/>
        <dbReference type="ChEBI" id="CHEBI:16335"/>
        <dbReference type="ChEBI" id="CHEBI:16708"/>
        <dbReference type="ChEBI" id="CHEBI:43474"/>
        <dbReference type="ChEBI" id="CHEBI:57720"/>
        <dbReference type="EC" id="2.4.2.1"/>
    </reaction>
</comment>
<comment type="catalytic activity">
    <reaction evidence="1">
        <text>cytidine + phosphate = cytosine + alpha-D-ribose 1-phosphate</text>
        <dbReference type="Rhea" id="RHEA:52540"/>
        <dbReference type="ChEBI" id="CHEBI:16040"/>
        <dbReference type="ChEBI" id="CHEBI:17562"/>
        <dbReference type="ChEBI" id="CHEBI:43474"/>
        <dbReference type="ChEBI" id="CHEBI:57720"/>
        <dbReference type="EC" id="2.4.2.2"/>
    </reaction>
</comment>
<comment type="catalytic activity">
    <reaction evidence="1">
        <text>guanosine + phosphate = alpha-D-ribose 1-phosphate + guanine</text>
        <dbReference type="Rhea" id="RHEA:13233"/>
        <dbReference type="ChEBI" id="CHEBI:16235"/>
        <dbReference type="ChEBI" id="CHEBI:16750"/>
        <dbReference type="ChEBI" id="CHEBI:43474"/>
        <dbReference type="ChEBI" id="CHEBI:57720"/>
        <dbReference type="EC" id="2.4.2.1"/>
    </reaction>
</comment>
<comment type="catalytic activity">
    <reaction evidence="1">
        <text>inosine + phosphate = alpha-D-ribose 1-phosphate + hypoxanthine</text>
        <dbReference type="Rhea" id="RHEA:27646"/>
        <dbReference type="ChEBI" id="CHEBI:17368"/>
        <dbReference type="ChEBI" id="CHEBI:17596"/>
        <dbReference type="ChEBI" id="CHEBI:43474"/>
        <dbReference type="ChEBI" id="CHEBI:57720"/>
        <dbReference type="EC" id="2.4.2.1"/>
    </reaction>
</comment>
<comment type="catalytic activity">
    <reaction evidence="1">
        <text>thymidine + phosphate = 2-deoxy-alpha-D-ribose 1-phosphate + thymine</text>
        <dbReference type="Rhea" id="RHEA:16037"/>
        <dbReference type="ChEBI" id="CHEBI:17748"/>
        <dbReference type="ChEBI" id="CHEBI:17821"/>
        <dbReference type="ChEBI" id="CHEBI:43474"/>
        <dbReference type="ChEBI" id="CHEBI:57259"/>
        <dbReference type="EC" id="2.4.2.2"/>
    </reaction>
</comment>
<comment type="catalytic activity">
    <reaction evidence="1">
        <text>uridine + phosphate = alpha-D-ribose 1-phosphate + uracil</text>
        <dbReference type="Rhea" id="RHEA:24388"/>
        <dbReference type="ChEBI" id="CHEBI:16704"/>
        <dbReference type="ChEBI" id="CHEBI:17568"/>
        <dbReference type="ChEBI" id="CHEBI:43474"/>
        <dbReference type="ChEBI" id="CHEBI:57720"/>
        <dbReference type="EC" id="2.4.2.2"/>
    </reaction>
</comment>
<comment type="catalytic activity">
    <reaction evidence="1">
        <text>xanthosine + phosphate = alpha-D-ribose 1-phosphate + xanthine</text>
        <dbReference type="Rhea" id="RHEA:27638"/>
        <dbReference type="ChEBI" id="CHEBI:17712"/>
        <dbReference type="ChEBI" id="CHEBI:18107"/>
        <dbReference type="ChEBI" id="CHEBI:43474"/>
        <dbReference type="ChEBI" id="CHEBI:57720"/>
        <dbReference type="EC" id="2.4.2.1"/>
    </reaction>
</comment>
<comment type="similarity">
    <text evidence="1">Belongs to the nucleoside phosphorylase PpnP family.</text>
</comment>